<accession>C1H563</accession>
<comment type="function">
    <text evidence="1">Lyase that catalyzes the C1-decarboxylation of 4-hydroxy-3-methoxy-5-(all-trans-polyprenyl)benzoic acid into 2-methoxy-6-(all-trans-polyprenyl)phenol during ubiquinone biosynthesis.</text>
</comment>
<comment type="catalytic activity">
    <reaction evidence="1">
        <text>a 4-hydroxy-3-methoxy-5-(all-trans-polyprenyl)benzoate + H(+) = a 2-methoxy-6-(all-trans-polyprenyl)phenol + CO2</text>
        <dbReference type="Rhea" id="RHEA:81179"/>
        <dbReference type="Rhea" id="RHEA-COMP:9551"/>
        <dbReference type="Rhea" id="RHEA-COMP:10931"/>
        <dbReference type="ChEBI" id="CHEBI:15378"/>
        <dbReference type="ChEBI" id="CHEBI:16526"/>
        <dbReference type="ChEBI" id="CHEBI:62731"/>
        <dbReference type="ChEBI" id="CHEBI:84443"/>
        <dbReference type="EC" id="4.1.1.130"/>
    </reaction>
</comment>
<comment type="cofactor">
    <cofactor evidence="1">
        <name>Zn(2+)</name>
        <dbReference type="ChEBI" id="CHEBI:29105"/>
    </cofactor>
</comment>
<comment type="pathway">
    <text evidence="1">Cofactor biosynthesis; ubiquinone biosynthesis.</text>
</comment>
<comment type="subunit">
    <text evidence="1">Component of a multi-subunit COQ enzyme complex, composed of at least COQ3, COQ4, COQ5, COQ6, COQ7 and COQ9.</text>
</comment>
<comment type="subcellular location">
    <subcellularLocation>
        <location evidence="1">Mitochondrion inner membrane</location>
        <topology evidence="1">Peripheral membrane protein</topology>
        <orientation evidence="1">Matrix side</orientation>
    </subcellularLocation>
</comment>
<comment type="similarity">
    <text evidence="1">Belongs to the COQ4 family.</text>
</comment>
<proteinExistence type="inferred from homology"/>
<sequence length="285" mass="32735">MPPAVRQGMRTVGTLRVTRPSSYVLSSREFSVLNRPPPNYPGHIPLTTIERGALAVGSAIGSLLNPRRADLIAALGEATATPYFIYRLRDAMLSNPTGRRILRDRPRISSKTLSVEYLRSLPPNSVGRTYVSWLDREGVGPDTRETVRYIDDEECAYVMQRYRECHDFYHAVTGLPIVVEGEVSLKTFEFANTLLPMTGLSMFAVMRLKPEERERYWKLHLPWAVRSGLASKEVINVYWEEELERDVNELREKLGIEKPPDLREIRKMMRRQKKAAKAAREKFEN</sequence>
<evidence type="ECO:0000255" key="1">
    <source>
        <dbReference type="HAMAP-Rule" id="MF_03111"/>
    </source>
</evidence>
<dbReference type="EC" id="4.1.1.130" evidence="1"/>
<dbReference type="EMBL" id="KN294007">
    <property type="protein sequence ID" value="EEH34857.1"/>
    <property type="molecule type" value="Genomic_DNA"/>
</dbReference>
<dbReference type="RefSeq" id="XP_002792116.1">
    <property type="nucleotide sequence ID" value="XM_002792070.2"/>
</dbReference>
<dbReference type="SMR" id="C1H563"/>
<dbReference type="STRING" id="502779.C1H563"/>
<dbReference type="GeneID" id="9095354"/>
<dbReference type="KEGG" id="pbl:PAAG_05904"/>
<dbReference type="VEuPathDB" id="FungiDB:PAAG_05904"/>
<dbReference type="eggNOG" id="KOG3244">
    <property type="taxonomic scope" value="Eukaryota"/>
</dbReference>
<dbReference type="HOGENOM" id="CLU_061241_0_0_1"/>
<dbReference type="OMA" id="YYERHFH"/>
<dbReference type="OrthoDB" id="4249at2759"/>
<dbReference type="UniPathway" id="UPA00232"/>
<dbReference type="Proteomes" id="UP000002059">
    <property type="component" value="Partially assembled WGS sequence"/>
</dbReference>
<dbReference type="GO" id="GO:0031314">
    <property type="term" value="C:extrinsic component of mitochondrial inner membrane"/>
    <property type="evidence" value="ECO:0007669"/>
    <property type="project" value="UniProtKB-UniRule"/>
</dbReference>
<dbReference type="GO" id="GO:0006744">
    <property type="term" value="P:ubiquinone biosynthetic process"/>
    <property type="evidence" value="ECO:0007669"/>
    <property type="project" value="UniProtKB-UniRule"/>
</dbReference>
<dbReference type="HAMAP" id="MF_03111">
    <property type="entry name" value="Coq4"/>
    <property type="match status" value="1"/>
</dbReference>
<dbReference type="InterPro" id="IPR007715">
    <property type="entry name" value="Coq4"/>
</dbReference>
<dbReference type="InterPro" id="IPR027540">
    <property type="entry name" value="Coq4_euk"/>
</dbReference>
<dbReference type="PANTHER" id="PTHR12922">
    <property type="entry name" value="UBIQUINONE BIOSYNTHESIS PROTEIN"/>
    <property type="match status" value="1"/>
</dbReference>
<dbReference type="PANTHER" id="PTHR12922:SF7">
    <property type="entry name" value="UBIQUINONE BIOSYNTHESIS PROTEIN COQ4 HOMOLOG, MITOCHONDRIAL"/>
    <property type="match status" value="1"/>
</dbReference>
<dbReference type="Pfam" id="PF05019">
    <property type="entry name" value="Coq4"/>
    <property type="match status" value="1"/>
</dbReference>
<protein>
    <recommendedName>
        <fullName evidence="1">Ubiquinone biosynthesis protein COQ4, mitochondrial</fullName>
    </recommendedName>
    <alternativeName>
        <fullName>4-hydroxy-3-methoxy-5-polyprenylbenzoate decarboxylase</fullName>
        <ecNumber evidence="1">4.1.1.130</ecNumber>
    </alternativeName>
    <alternativeName>
        <fullName evidence="1">Coenzyme Q biosynthesis protein 4</fullName>
    </alternativeName>
</protein>
<organism>
    <name type="scientific">Paracoccidioides lutzii (strain ATCC MYA-826 / Pb01)</name>
    <name type="common">Paracoccidioides brasiliensis</name>
    <dbReference type="NCBI Taxonomy" id="502779"/>
    <lineage>
        <taxon>Eukaryota</taxon>
        <taxon>Fungi</taxon>
        <taxon>Dikarya</taxon>
        <taxon>Ascomycota</taxon>
        <taxon>Pezizomycotina</taxon>
        <taxon>Eurotiomycetes</taxon>
        <taxon>Eurotiomycetidae</taxon>
        <taxon>Onygenales</taxon>
        <taxon>Ajellomycetaceae</taxon>
        <taxon>Paracoccidioides</taxon>
    </lineage>
</organism>
<gene>
    <name evidence="1" type="primary">COQ4</name>
    <name type="ORF">PAAG_05904</name>
</gene>
<reference key="1">
    <citation type="journal article" date="2011" name="PLoS Genet.">
        <title>Comparative genomic analysis of human fungal pathogens causing paracoccidioidomycosis.</title>
        <authorList>
            <person name="Desjardins C.A."/>
            <person name="Champion M.D."/>
            <person name="Holder J.W."/>
            <person name="Muszewska A."/>
            <person name="Goldberg J."/>
            <person name="Bailao A.M."/>
            <person name="Brigido M.M."/>
            <person name="Ferreira M.E."/>
            <person name="Garcia A.M."/>
            <person name="Grynberg M."/>
            <person name="Gujja S."/>
            <person name="Heiman D.I."/>
            <person name="Henn M.R."/>
            <person name="Kodira C.D."/>
            <person name="Leon-Narvaez H."/>
            <person name="Longo L.V.G."/>
            <person name="Ma L.-J."/>
            <person name="Malavazi I."/>
            <person name="Matsuo A.L."/>
            <person name="Morais F.V."/>
            <person name="Pereira M."/>
            <person name="Rodriguez-Brito S."/>
            <person name="Sakthikumar S."/>
            <person name="Salem-Izacc S.M."/>
            <person name="Sykes S.M."/>
            <person name="Teixeira M.M."/>
            <person name="Vallejo M.C."/>
            <person name="Walter M.E."/>
            <person name="Yandava C."/>
            <person name="Young S."/>
            <person name="Zeng Q."/>
            <person name="Zucker J."/>
            <person name="Felipe M.S."/>
            <person name="Goldman G.H."/>
            <person name="Haas B.J."/>
            <person name="McEwen J.G."/>
            <person name="Nino-Vega G."/>
            <person name="Puccia R."/>
            <person name="San-Blas G."/>
            <person name="Soares C.M."/>
            <person name="Birren B.W."/>
            <person name="Cuomo C.A."/>
        </authorList>
    </citation>
    <scope>NUCLEOTIDE SEQUENCE [LARGE SCALE GENOMIC DNA]</scope>
    <source>
        <strain>ATCC MYA-826 / Pb01</strain>
    </source>
</reference>
<keyword id="KW-0456">Lyase</keyword>
<keyword id="KW-0472">Membrane</keyword>
<keyword id="KW-0479">Metal-binding</keyword>
<keyword id="KW-0496">Mitochondrion</keyword>
<keyword id="KW-0999">Mitochondrion inner membrane</keyword>
<keyword id="KW-1185">Reference proteome</keyword>
<keyword id="KW-0809">Transit peptide</keyword>
<keyword id="KW-0831">Ubiquinone biosynthesis</keyword>
<keyword id="KW-0862">Zinc</keyword>
<feature type="transit peptide" description="Mitochondrion" evidence="1">
    <location>
        <begin position="1"/>
        <end position="11"/>
    </location>
</feature>
<feature type="chain" id="PRO_0000388123" description="Ubiquinone biosynthesis protein COQ4, mitochondrial">
    <location>
        <begin position="12"/>
        <end position="285"/>
    </location>
</feature>
<feature type="binding site" evidence="1">
    <location>
        <position position="166"/>
    </location>
    <ligand>
        <name>Zn(2+)</name>
        <dbReference type="ChEBI" id="CHEBI:29105"/>
    </ligand>
</feature>
<feature type="binding site" evidence="1">
    <location>
        <position position="167"/>
    </location>
    <ligand>
        <name>Zn(2+)</name>
        <dbReference type="ChEBI" id="CHEBI:29105"/>
    </ligand>
</feature>
<feature type="binding site" evidence="1">
    <location>
        <position position="170"/>
    </location>
    <ligand>
        <name>Zn(2+)</name>
        <dbReference type="ChEBI" id="CHEBI:29105"/>
    </ligand>
</feature>
<feature type="binding site" evidence="1">
    <location>
        <position position="182"/>
    </location>
    <ligand>
        <name>Zn(2+)</name>
        <dbReference type="ChEBI" id="CHEBI:29105"/>
    </ligand>
</feature>
<name>COQ4_PARBA</name>